<keyword id="KW-0927">Auxin signaling pathway</keyword>
<keyword id="KW-0539">Nucleus</keyword>
<keyword id="KW-1185">Reference proteome</keyword>
<keyword id="KW-0678">Repressor</keyword>
<keyword id="KW-0804">Transcription</keyword>
<keyword id="KW-0805">Transcription regulation</keyword>
<dbReference type="EMBL" id="AB004933">
    <property type="protein sequence ID" value="BAA20849.1"/>
    <property type="molecule type" value="mRNA"/>
</dbReference>
<dbReference type="PIR" id="T10885">
    <property type="entry name" value="T10885"/>
</dbReference>
<dbReference type="RefSeq" id="NP_001304245.1">
    <property type="nucleotide sequence ID" value="NM_001317316.1"/>
</dbReference>
<dbReference type="SMR" id="O24543"/>
<dbReference type="STRING" id="3916.O24543"/>
<dbReference type="GeneID" id="106757071"/>
<dbReference type="KEGG" id="vra:106757071"/>
<dbReference type="OrthoDB" id="1926344at2759"/>
<dbReference type="Proteomes" id="UP000087766">
    <property type="component" value="Chromosome 3"/>
</dbReference>
<dbReference type="GO" id="GO:0005634">
    <property type="term" value="C:nucleus"/>
    <property type="evidence" value="ECO:0007669"/>
    <property type="project" value="UniProtKB-SubCell"/>
</dbReference>
<dbReference type="GO" id="GO:0009734">
    <property type="term" value="P:auxin-activated signaling pathway"/>
    <property type="evidence" value="ECO:0007669"/>
    <property type="project" value="UniProtKB-KW"/>
</dbReference>
<dbReference type="GO" id="GO:0006355">
    <property type="term" value="P:regulation of DNA-templated transcription"/>
    <property type="evidence" value="ECO:0007669"/>
    <property type="project" value="InterPro"/>
</dbReference>
<dbReference type="FunFam" id="3.10.20.90:FF:000078">
    <property type="entry name" value="Auxin-responsive protein"/>
    <property type="match status" value="1"/>
</dbReference>
<dbReference type="Gene3D" id="3.10.20.90">
    <property type="entry name" value="Phosphatidylinositol 3-kinase Catalytic Subunit, Chain A, domain 1"/>
    <property type="match status" value="1"/>
</dbReference>
<dbReference type="InterPro" id="IPR033389">
    <property type="entry name" value="AUX/IAA_dom"/>
</dbReference>
<dbReference type="InterPro" id="IPR003311">
    <property type="entry name" value="AUX_IAA"/>
</dbReference>
<dbReference type="InterPro" id="IPR053793">
    <property type="entry name" value="PB1-like"/>
</dbReference>
<dbReference type="PANTHER" id="PTHR31734">
    <property type="entry name" value="AUXIN-RESPONSIVE PROTEIN IAA17"/>
    <property type="match status" value="1"/>
</dbReference>
<dbReference type="PANTHER" id="PTHR31734:SF8">
    <property type="entry name" value="AUXIN-RESPONSIVE PROTEIN IAA24"/>
    <property type="match status" value="1"/>
</dbReference>
<dbReference type="Pfam" id="PF02309">
    <property type="entry name" value="AUX_IAA"/>
    <property type="match status" value="1"/>
</dbReference>
<dbReference type="SUPFAM" id="SSF54277">
    <property type="entry name" value="CAD &amp; PB1 domains"/>
    <property type="match status" value="1"/>
</dbReference>
<dbReference type="PROSITE" id="PS51745">
    <property type="entry name" value="PB1"/>
    <property type="match status" value="1"/>
</dbReference>
<organism>
    <name type="scientific">Vigna radiata var. radiata</name>
    <name type="common">Mung bean</name>
    <name type="synonym">Phaseolus aureus</name>
    <dbReference type="NCBI Taxonomy" id="3916"/>
    <lineage>
        <taxon>Eukaryota</taxon>
        <taxon>Viridiplantae</taxon>
        <taxon>Streptophyta</taxon>
        <taxon>Embryophyta</taxon>
        <taxon>Tracheophyta</taxon>
        <taxon>Spermatophyta</taxon>
        <taxon>Magnoliopsida</taxon>
        <taxon>eudicotyledons</taxon>
        <taxon>Gunneridae</taxon>
        <taxon>Pentapetalae</taxon>
        <taxon>rosids</taxon>
        <taxon>fabids</taxon>
        <taxon>Fabales</taxon>
        <taxon>Fabaceae</taxon>
        <taxon>Papilionoideae</taxon>
        <taxon>50 kb inversion clade</taxon>
        <taxon>NPAAA clade</taxon>
        <taxon>indigoferoid/millettioid clade</taxon>
        <taxon>Phaseoleae</taxon>
        <taxon>Vigna</taxon>
    </lineage>
</organism>
<accession>O24543</accession>
<feature type="chain" id="PRO_0000112867" description="Auxin-induced protein 22E">
    <location>
        <begin position="1"/>
        <end position="203"/>
    </location>
</feature>
<feature type="domain" description="PB1" evidence="2">
    <location>
        <begin position="107"/>
        <end position="199"/>
    </location>
</feature>
<feature type="region of interest" description="Disordered" evidence="3">
    <location>
        <begin position="15"/>
        <end position="77"/>
    </location>
</feature>
<feature type="short sequence motif" description="EAR-like (transcriptional repression)">
    <location>
        <begin position="15"/>
        <end position="19"/>
    </location>
</feature>
<feature type="compositionally biased region" description="Basic and acidic residues" evidence="3">
    <location>
        <begin position="43"/>
        <end position="52"/>
    </location>
</feature>
<feature type="compositionally biased region" description="Low complexity" evidence="3">
    <location>
        <begin position="58"/>
        <end position="67"/>
    </location>
</feature>
<proteinExistence type="evidence at transcript level"/>
<evidence type="ECO:0000250" key="1"/>
<evidence type="ECO:0000255" key="2">
    <source>
        <dbReference type="PROSITE-ProRule" id="PRU01081"/>
    </source>
</evidence>
<evidence type="ECO:0000256" key="3">
    <source>
        <dbReference type="SAM" id="MobiDB-lite"/>
    </source>
</evidence>
<evidence type="ECO:0000305" key="4"/>
<name>AX22E_VIGRR</name>
<sequence length="203" mass="22695">MGSYETELNLRATELRLGLPGSDEPQEKRPCSGSVVRSSNKRSSPELEESRCKSNINSDSSDSTTTSDHNEDSVQPAKVQVVGWPPIRSFRKNSLQQKKVEQGDGTGMYLKVSMAGAPYLRKIDLKVYKSYPELLKALQNLFKCTFGEYSEREGYNGSEYAPTYEDKDGDWMLVGDVPWNMFVSSCKRLRIIKGSEAKGLGCL</sequence>
<comment type="function">
    <text evidence="1">Aux/IAA proteins are short-lived transcriptional factors that function as repressors of early auxin response genes at low auxin concentrations. Repression is thought to result from the interaction with auxin response factors (ARFs), proteins that bind to the auxin-responsive promoter element (AuxRE). Formation of heterodimers with ARF proteins may alter their ability to modulate early auxin response genes expression (By similarity).</text>
</comment>
<comment type="subunit">
    <text evidence="1">Homodimers and heterodimers.</text>
</comment>
<comment type="subcellular location">
    <subcellularLocation>
        <location evidence="1">Nucleus</location>
    </subcellularLocation>
</comment>
<comment type="induction">
    <text>By auxin.</text>
</comment>
<comment type="domain">
    <text evidence="1">The N-terminal half of the protein contains two conserved domains I and II. Domain I includes a slightly degenerated ERF-associated amphiphilic repression (EAR) motif which seems to be involved in the activity of transcriptional repression. Domain II is required for the correct degradation of the protein through the SCF-mediated ubiquitin-proteasome pathway. Interactions between Aux/IAA proteins and auxin response factors (ARFs) occur through their C-terminal dimerization domains III and IV (By similarity).</text>
</comment>
<comment type="similarity">
    <text evidence="4">Belongs to the Aux/IAA family.</text>
</comment>
<reference key="1">
    <citation type="online journal article" date="1997" name="Plant Gene Register">
        <title>Three more members of the Aux/IAA gene family from mung bean (Vigna radiata) hypocotyl.</title>
        <authorList>
            <person name="Hashimoto H."/>
            <person name="Yamamoto K.T."/>
        </authorList>
        <locator>PGR97-137</locator>
    </citation>
    <scope>NUCLEOTIDE SEQUENCE [MRNA]</scope>
    <source>
        <tissue>Hypocotyl</tissue>
    </source>
</reference>
<gene>
    <name type="primary">AUX22E</name>
    <name type="synonym">ARG14</name>
</gene>
<protein>
    <recommendedName>
        <fullName>Auxin-induced protein 22E</fullName>
    </recommendedName>
    <alternativeName>
        <fullName>Indole-3-acetic acid-induced protein ARG14</fullName>
    </alternativeName>
</protein>